<keyword id="KW-0028">Amino-acid biosynthesis</keyword>
<keyword id="KW-0057">Aromatic amino acid biosynthesis</keyword>
<keyword id="KW-0170">Cobalt</keyword>
<keyword id="KW-0963">Cytoplasm</keyword>
<keyword id="KW-0456">Lyase</keyword>
<keyword id="KW-0479">Metal-binding</keyword>
<keyword id="KW-0520">NAD</keyword>
<keyword id="KW-0547">Nucleotide-binding</keyword>
<keyword id="KW-0862">Zinc</keyword>
<reference key="1">
    <citation type="submission" date="2007-11" db="EMBL/GenBank/DDBJ databases">
        <authorList>
            <consortium name="The Salmonella enterica serovar Paratyphi B Genome Sequencing Project"/>
            <person name="McClelland M."/>
            <person name="Sanderson E.K."/>
            <person name="Porwollik S."/>
            <person name="Spieth J."/>
            <person name="Clifton W.S."/>
            <person name="Fulton R."/>
            <person name="Cordes M."/>
            <person name="Wollam A."/>
            <person name="Shah N."/>
            <person name="Pepin K."/>
            <person name="Bhonagiri V."/>
            <person name="Nash W."/>
            <person name="Johnson M."/>
            <person name="Thiruvilangam P."/>
            <person name="Wilson R."/>
        </authorList>
    </citation>
    <scope>NUCLEOTIDE SEQUENCE [LARGE SCALE GENOMIC DNA]</scope>
    <source>
        <strain>ATCC BAA-1250 / SPB7</strain>
    </source>
</reference>
<name>AROB_SALPB</name>
<proteinExistence type="inferred from homology"/>
<feature type="chain" id="PRO_1000094601" description="3-dehydroquinate synthase">
    <location>
        <begin position="1"/>
        <end position="362"/>
    </location>
</feature>
<feature type="binding site" evidence="1">
    <location>
        <begin position="71"/>
        <end position="76"/>
    </location>
    <ligand>
        <name>NAD(+)</name>
        <dbReference type="ChEBI" id="CHEBI:57540"/>
    </ligand>
</feature>
<feature type="binding site" evidence="1">
    <location>
        <begin position="105"/>
        <end position="109"/>
    </location>
    <ligand>
        <name>NAD(+)</name>
        <dbReference type="ChEBI" id="CHEBI:57540"/>
    </ligand>
</feature>
<feature type="binding site" evidence="1">
    <location>
        <begin position="129"/>
        <end position="130"/>
    </location>
    <ligand>
        <name>NAD(+)</name>
        <dbReference type="ChEBI" id="CHEBI:57540"/>
    </ligand>
</feature>
<feature type="binding site" evidence="1">
    <location>
        <position position="142"/>
    </location>
    <ligand>
        <name>NAD(+)</name>
        <dbReference type="ChEBI" id="CHEBI:57540"/>
    </ligand>
</feature>
<feature type="binding site" evidence="1">
    <location>
        <position position="151"/>
    </location>
    <ligand>
        <name>NAD(+)</name>
        <dbReference type="ChEBI" id="CHEBI:57540"/>
    </ligand>
</feature>
<feature type="binding site" evidence="1">
    <location>
        <begin position="169"/>
        <end position="172"/>
    </location>
    <ligand>
        <name>NAD(+)</name>
        <dbReference type="ChEBI" id="CHEBI:57540"/>
    </ligand>
</feature>
<feature type="binding site" evidence="1">
    <location>
        <position position="184"/>
    </location>
    <ligand>
        <name>Zn(2+)</name>
        <dbReference type="ChEBI" id="CHEBI:29105"/>
    </ligand>
</feature>
<feature type="binding site" evidence="1">
    <location>
        <position position="247"/>
    </location>
    <ligand>
        <name>Zn(2+)</name>
        <dbReference type="ChEBI" id="CHEBI:29105"/>
    </ligand>
</feature>
<feature type="binding site" evidence="1">
    <location>
        <position position="264"/>
    </location>
    <ligand>
        <name>Zn(2+)</name>
        <dbReference type="ChEBI" id="CHEBI:29105"/>
    </ligand>
</feature>
<gene>
    <name evidence="1" type="primary">aroB</name>
    <name type="ordered locus">SPAB_04338</name>
</gene>
<accession>A9MT55</accession>
<organism>
    <name type="scientific">Salmonella paratyphi B (strain ATCC BAA-1250 / SPB7)</name>
    <dbReference type="NCBI Taxonomy" id="1016998"/>
    <lineage>
        <taxon>Bacteria</taxon>
        <taxon>Pseudomonadati</taxon>
        <taxon>Pseudomonadota</taxon>
        <taxon>Gammaproteobacteria</taxon>
        <taxon>Enterobacterales</taxon>
        <taxon>Enterobacteriaceae</taxon>
        <taxon>Salmonella</taxon>
    </lineage>
</organism>
<protein>
    <recommendedName>
        <fullName evidence="1">3-dehydroquinate synthase</fullName>
        <shortName evidence="1">DHQS</shortName>
        <ecNumber evidence="1">4.2.3.4</ecNumber>
    </recommendedName>
</protein>
<sequence>MERITVTLGERSYPITIAAGLFNEPASFLPLKSGDQVMLVTNETLAPLYLDKVRGVLERAGVNVDSVILPDGEQYKSLTVLDTVFTALLKKPHGRDTTLVALGGGVIGDLTGFAAASYQRGVRFIQVPTTLLSQVDSSVGGKTAVNHPLGKNMIGAFYQPASVVVDLDCLKTLPARELASGLAEVIKYGIILDADFFTWLEGNLDALLRLDGPAMAYCIRRCCELKAEVVAADEREAGLRALLNLGHTFGHAIEAEMGYGNWLHGEAVAAGIVMAARASERLGQFSSADTQRIIALLERAGLPVNGPCEMSAQDYLPHMLRDKKVLAGELRLVLPLAIGKSEVRGGVSHEVVLSAIADCQQA</sequence>
<evidence type="ECO:0000255" key="1">
    <source>
        <dbReference type="HAMAP-Rule" id="MF_00110"/>
    </source>
</evidence>
<dbReference type="EC" id="4.2.3.4" evidence="1"/>
<dbReference type="EMBL" id="CP000886">
    <property type="protein sequence ID" value="ABX69655.1"/>
    <property type="molecule type" value="Genomic_DNA"/>
</dbReference>
<dbReference type="RefSeq" id="WP_000439824.1">
    <property type="nucleotide sequence ID" value="NC_010102.1"/>
</dbReference>
<dbReference type="SMR" id="A9MT55"/>
<dbReference type="KEGG" id="spq:SPAB_04338"/>
<dbReference type="PATRIC" id="fig|1016998.12.peg.4083"/>
<dbReference type="HOGENOM" id="CLU_001201_0_2_6"/>
<dbReference type="BioCyc" id="SENT1016998:SPAB_RS17660-MONOMER"/>
<dbReference type="UniPathway" id="UPA00053">
    <property type="reaction ID" value="UER00085"/>
</dbReference>
<dbReference type="Proteomes" id="UP000008556">
    <property type="component" value="Chromosome"/>
</dbReference>
<dbReference type="GO" id="GO:0005737">
    <property type="term" value="C:cytoplasm"/>
    <property type="evidence" value="ECO:0007669"/>
    <property type="project" value="UniProtKB-SubCell"/>
</dbReference>
<dbReference type="GO" id="GO:0003856">
    <property type="term" value="F:3-dehydroquinate synthase activity"/>
    <property type="evidence" value="ECO:0007669"/>
    <property type="project" value="UniProtKB-UniRule"/>
</dbReference>
<dbReference type="GO" id="GO:0046872">
    <property type="term" value="F:metal ion binding"/>
    <property type="evidence" value="ECO:0007669"/>
    <property type="project" value="UniProtKB-KW"/>
</dbReference>
<dbReference type="GO" id="GO:0000166">
    <property type="term" value="F:nucleotide binding"/>
    <property type="evidence" value="ECO:0007669"/>
    <property type="project" value="UniProtKB-KW"/>
</dbReference>
<dbReference type="GO" id="GO:0008652">
    <property type="term" value="P:amino acid biosynthetic process"/>
    <property type="evidence" value="ECO:0007669"/>
    <property type="project" value="UniProtKB-KW"/>
</dbReference>
<dbReference type="GO" id="GO:0009073">
    <property type="term" value="P:aromatic amino acid family biosynthetic process"/>
    <property type="evidence" value="ECO:0007669"/>
    <property type="project" value="UniProtKB-KW"/>
</dbReference>
<dbReference type="GO" id="GO:0009423">
    <property type="term" value="P:chorismate biosynthetic process"/>
    <property type="evidence" value="ECO:0007669"/>
    <property type="project" value="UniProtKB-UniRule"/>
</dbReference>
<dbReference type="CDD" id="cd08195">
    <property type="entry name" value="DHQS"/>
    <property type="match status" value="1"/>
</dbReference>
<dbReference type="FunFam" id="1.20.1090.10:FF:000002">
    <property type="entry name" value="3-dehydroquinate synthase"/>
    <property type="match status" value="1"/>
</dbReference>
<dbReference type="FunFam" id="3.40.50.1970:FF:000001">
    <property type="entry name" value="3-dehydroquinate synthase"/>
    <property type="match status" value="1"/>
</dbReference>
<dbReference type="Gene3D" id="3.40.50.1970">
    <property type="match status" value="1"/>
</dbReference>
<dbReference type="Gene3D" id="1.20.1090.10">
    <property type="entry name" value="Dehydroquinate synthase-like - alpha domain"/>
    <property type="match status" value="1"/>
</dbReference>
<dbReference type="HAMAP" id="MF_00110">
    <property type="entry name" value="DHQ_synthase"/>
    <property type="match status" value="1"/>
</dbReference>
<dbReference type="InterPro" id="IPR050071">
    <property type="entry name" value="Dehydroquinate_synthase"/>
</dbReference>
<dbReference type="InterPro" id="IPR016037">
    <property type="entry name" value="DHQ_synth_AroB"/>
</dbReference>
<dbReference type="InterPro" id="IPR030963">
    <property type="entry name" value="DHQ_synth_fam"/>
</dbReference>
<dbReference type="InterPro" id="IPR030960">
    <property type="entry name" value="DHQS/DOIS_N"/>
</dbReference>
<dbReference type="InterPro" id="IPR056179">
    <property type="entry name" value="DHQS_C"/>
</dbReference>
<dbReference type="NCBIfam" id="TIGR01357">
    <property type="entry name" value="aroB"/>
    <property type="match status" value="1"/>
</dbReference>
<dbReference type="PANTHER" id="PTHR43622">
    <property type="entry name" value="3-DEHYDROQUINATE SYNTHASE"/>
    <property type="match status" value="1"/>
</dbReference>
<dbReference type="PANTHER" id="PTHR43622:SF7">
    <property type="entry name" value="3-DEHYDROQUINATE SYNTHASE, CHLOROPLASTIC"/>
    <property type="match status" value="1"/>
</dbReference>
<dbReference type="Pfam" id="PF01761">
    <property type="entry name" value="DHQ_synthase"/>
    <property type="match status" value="1"/>
</dbReference>
<dbReference type="Pfam" id="PF24621">
    <property type="entry name" value="DHQS_C"/>
    <property type="match status" value="1"/>
</dbReference>
<dbReference type="PIRSF" id="PIRSF001455">
    <property type="entry name" value="DHQ_synth"/>
    <property type="match status" value="1"/>
</dbReference>
<dbReference type="SUPFAM" id="SSF56796">
    <property type="entry name" value="Dehydroquinate synthase-like"/>
    <property type="match status" value="1"/>
</dbReference>
<comment type="function">
    <text evidence="1">Catalyzes the conversion of 3-deoxy-D-arabino-heptulosonate 7-phosphate (DAHP) to dehydroquinate (DHQ).</text>
</comment>
<comment type="catalytic activity">
    <reaction evidence="1">
        <text>7-phospho-2-dehydro-3-deoxy-D-arabino-heptonate = 3-dehydroquinate + phosphate</text>
        <dbReference type="Rhea" id="RHEA:21968"/>
        <dbReference type="ChEBI" id="CHEBI:32364"/>
        <dbReference type="ChEBI" id="CHEBI:43474"/>
        <dbReference type="ChEBI" id="CHEBI:58394"/>
        <dbReference type="EC" id="4.2.3.4"/>
    </reaction>
</comment>
<comment type="cofactor">
    <cofactor evidence="1">
        <name>Co(2+)</name>
        <dbReference type="ChEBI" id="CHEBI:48828"/>
    </cofactor>
    <cofactor evidence="1">
        <name>Zn(2+)</name>
        <dbReference type="ChEBI" id="CHEBI:29105"/>
    </cofactor>
    <text evidence="1">Binds 1 divalent metal cation per subunit. Can use either Co(2+) or Zn(2+).</text>
</comment>
<comment type="cofactor">
    <cofactor evidence="1">
        <name>NAD(+)</name>
        <dbReference type="ChEBI" id="CHEBI:57540"/>
    </cofactor>
</comment>
<comment type="pathway">
    <text evidence="1">Metabolic intermediate biosynthesis; chorismate biosynthesis; chorismate from D-erythrose 4-phosphate and phosphoenolpyruvate: step 2/7.</text>
</comment>
<comment type="subcellular location">
    <subcellularLocation>
        <location evidence="1">Cytoplasm</location>
    </subcellularLocation>
</comment>
<comment type="similarity">
    <text evidence="1">Belongs to the sugar phosphate cyclases superfamily. Dehydroquinate synthase family.</text>
</comment>